<keyword id="KW-0030">Aminoacyl-tRNA synthetase</keyword>
<keyword id="KW-0067">ATP-binding</keyword>
<keyword id="KW-0963">Cytoplasm</keyword>
<keyword id="KW-0436">Ligase</keyword>
<keyword id="KW-0547">Nucleotide-binding</keyword>
<keyword id="KW-0648">Protein biosynthesis</keyword>
<keyword id="KW-1185">Reference proteome</keyword>
<name>SYE_NATPD</name>
<accession>Q3IPL2</accession>
<protein>
    <recommendedName>
        <fullName evidence="1">Glutamate--tRNA ligase</fullName>
        <ecNumber evidence="1">6.1.1.17</ecNumber>
    </recommendedName>
    <alternativeName>
        <fullName evidence="1">Glutamyl-tRNA synthetase</fullName>
        <shortName evidence="1">GluRS</shortName>
    </alternativeName>
</protein>
<organism>
    <name type="scientific">Natronomonas pharaonis (strain ATCC 35678 / DSM 2160 / CIP 103997 / JCM 8858 / NBRC 14720 / NCIMB 2260 / Gabara)</name>
    <name type="common">Halobacterium pharaonis</name>
    <dbReference type="NCBI Taxonomy" id="348780"/>
    <lineage>
        <taxon>Archaea</taxon>
        <taxon>Methanobacteriati</taxon>
        <taxon>Methanobacteriota</taxon>
        <taxon>Stenosarchaea group</taxon>
        <taxon>Halobacteria</taxon>
        <taxon>Halobacteriales</taxon>
        <taxon>Haloarculaceae</taxon>
        <taxon>Natronomonas</taxon>
    </lineage>
</organism>
<sequence length="571" mass="64418">MDEDLRERIEREAETAALFNALKHESDAQVGAILGPMMGENPDFRPHGDEIPGIISPVIERVNGLSDEEKRERLEELAPEKVEALAAEDEGDDRPLPELPNADAYDDVRMRLAPNPNGPWHVGHARMPAVIGTYKDRYDGWFCVRFDDTDPETKRPDLDAYGEILDAIDYLGFEPDEVVKASDRVETYYEYGRKLIKAGGAYTCSCDAESFSELKNNAEACPHRDKDIETTLSEFEAMIDGEYSAGEMVLRVRTDIEHKNPALRDWVAFRMVDTPHPREEAADYRCWPMLDFQSGIDDHEFGISHIIRGIDLQDSAKRQQFVYEYFDWEYPEVIHWGHVQIDAYDIEMSTSTIKQLIDDGELDDWDDPRAPTVASLKRRGIRGQAIVNAMVELGTSTSNVDLAMSSVYAENREFVDDEADRRFFVRDGVEKPLAGGPESASPPLHPNDEDRGRREIPVGDAVYVEPDDVPADGERVWLKGLGPVRHEDGAFVATDDDIEVVRDGAVDVVHWVPAQESVPLRLRTVDGDEAGHAEPGIETYDADDIVQFERIGFARIDRHDDEESVAYFAHP</sequence>
<evidence type="ECO:0000255" key="1">
    <source>
        <dbReference type="HAMAP-Rule" id="MF_02076"/>
    </source>
</evidence>
<evidence type="ECO:0000256" key="2">
    <source>
        <dbReference type="SAM" id="MobiDB-lite"/>
    </source>
</evidence>
<dbReference type="EC" id="6.1.1.17" evidence="1"/>
<dbReference type="EMBL" id="CR936257">
    <property type="protein sequence ID" value="CAI49938.1"/>
    <property type="molecule type" value="Genomic_DNA"/>
</dbReference>
<dbReference type="RefSeq" id="WP_011323556.1">
    <property type="nucleotide sequence ID" value="NC_007426.1"/>
</dbReference>
<dbReference type="SMR" id="Q3IPL2"/>
<dbReference type="STRING" id="348780.NP_3694A"/>
<dbReference type="EnsemblBacteria" id="CAI49938">
    <property type="protein sequence ID" value="CAI49938"/>
    <property type="gene ID" value="NP_3694A"/>
</dbReference>
<dbReference type="GeneID" id="3702761"/>
<dbReference type="KEGG" id="nph:NP_3694A"/>
<dbReference type="eggNOG" id="arCOG04302">
    <property type="taxonomic scope" value="Archaea"/>
</dbReference>
<dbReference type="HOGENOM" id="CLU_001882_1_3_2"/>
<dbReference type="OrthoDB" id="10470at2157"/>
<dbReference type="Proteomes" id="UP000002698">
    <property type="component" value="Chromosome"/>
</dbReference>
<dbReference type="GO" id="GO:0005829">
    <property type="term" value="C:cytosol"/>
    <property type="evidence" value="ECO:0007669"/>
    <property type="project" value="TreeGrafter"/>
</dbReference>
<dbReference type="GO" id="GO:0005524">
    <property type="term" value="F:ATP binding"/>
    <property type="evidence" value="ECO:0007669"/>
    <property type="project" value="UniProtKB-UniRule"/>
</dbReference>
<dbReference type="GO" id="GO:0004818">
    <property type="term" value="F:glutamate-tRNA ligase activity"/>
    <property type="evidence" value="ECO:0007669"/>
    <property type="project" value="UniProtKB-UniRule"/>
</dbReference>
<dbReference type="GO" id="GO:0043604">
    <property type="term" value="P:amide biosynthetic process"/>
    <property type="evidence" value="ECO:0007669"/>
    <property type="project" value="TreeGrafter"/>
</dbReference>
<dbReference type="GO" id="GO:0006424">
    <property type="term" value="P:glutamyl-tRNA aminoacylation"/>
    <property type="evidence" value="ECO:0007669"/>
    <property type="project" value="UniProtKB-UniRule"/>
</dbReference>
<dbReference type="Gene3D" id="2.40.240.100">
    <property type="match status" value="1"/>
</dbReference>
<dbReference type="Gene3D" id="3.40.50.620">
    <property type="entry name" value="HUPs"/>
    <property type="match status" value="1"/>
</dbReference>
<dbReference type="Gene3D" id="2.40.240.10">
    <property type="entry name" value="Ribosomal Protein L25, Chain P"/>
    <property type="match status" value="1"/>
</dbReference>
<dbReference type="HAMAP" id="MF_02076">
    <property type="entry name" value="Glu_tRNA_synth_type2"/>
    <property type="match status" value="1"/>
</dbReference>
<dbReference type="InterPro" id="IPR050132">
    <property type="entry name" value="Gln/Glu-tRNA_Ligase"/>
</dbReference>
<dbReference type="InterPro" id="IPR004526">
    <property type="entry name" value="Glu-tRNA-synth_arc/euk"/>
</dbReference>
<dbReference type="InterPro" id="IPR000924">
    <property type="entry name" value="Glu/Gln-tRNA-synth"/>
</dbReference>
<dbReference type="InterPro" id="IPR020058">
    <property type="entry name" value="Glu/Gln-tRNA-synth_Ib_cat-dom"/>
</dbReference>
<dbReference type="InterPro" id="IPR020059">
    <property type="entry name" value="Glu/Gln-tRNA-synth_Ib_codon-bd"/>
</dbReference>
<dbReference type="InterPro" id="IPR020056">
    <property type="entry name" value="Rbsml_bL25/Gln-tRNA_synth_N"/>
</dbReference>
<dbReference type="InterPro" id="IPR011035">
    <property type="entry name" value="Ribosomal_bL25/Gln-tRNA_synth"/>
</dbReference>
<dbReference type="InterPro" id="IPR014729">
    <property type="entry name" value="Rossmann-like_a/b/a_fold"/>
</dbReference>
<dbReference type="InterPro" id="IPR049437">
    <property type="entry name" value="tRNA-synt_1c_C2"/>
</dbReference>
<dbReference type="NCBIfam" id="TIGR00463">
    <property type="entry name" value="gltX_arch"/>
    <property type="match status" value="1"/>
</dbReference>
<dbReference type="NCBIfam" id="NF003169">
    <property type="entry name" value="PRK04156.1"/>
    <property type="match status" value="1"/>
</dbReference>
<dbReference type="PANTHER" id="PTHR43097:SF5">
    <property type="entry name" value="GLUTAMATE--TRNA LIGASE"/>
    <property type="match status" value="1"/>
</dbReference>
<dbReference type="PANTHER" id="PTHR43097">
    <property type="entry name" value="GLUTAMINE-TRNA LIGASE"/>
    <property type="match status" value="1"/>
</dbReference>
<dbReference type="Pfam" id="PF00749">
    <property type="entry name" value="tRNA-synt_1c"/>
    <property type="match status" value="1"/>
</dbReference>
<dbReference type="Pfam" id="PF03950">
    <property type="entry name" value="tRNA-synt_1c_C"/>
    <property type="match status" value="1"/>
</dbReference>
<dbReference type="Pfam" id="PF20974">
    <property type="entry name" value="tRNA-synt_1c_C2"/>
    <property type="match status" value="1"/>
</dbReference>
<dbReference type="PRINTS" id="PR00987">
    <property type="entry name" value="TRNASYNTHGLU"/>
</dbReference>
<dbReference type="SUPFAM" id="SSF52374">
    <property type="entry name" value="Nucleotidylyl transferase"/>
    <property type="match status" value="1"/>
</dbReference>
<dbReference type="SUPFAM" id="SSF50715">
    <property type="entry name" value="Ribosomal protein L25-like"/>
    <property type="match status" value="1"/>
</dbReference>
<feature type="chain" id="PRO_0000237425" description="Glutamate--tRNA ligase">
    <location>
        <begin position="1"/>
        <end position="571"/>
    </location>
</feature>
<feature type="region of interest" description="Disordered" evidence="2">
    <location>
        <begin position="431"/>
        <end position="453"/>
    </location>
</feature>
<feature type="short sequence motif" description="'HIGH' region" evidence="1">
    <location>
        <begin position="114"/>
        <end position="124"/>
    </location>
</feature>
<proteinExistence type="inferred from homology"/>
<gene>
    <name evidence="1" type="primary">gltX</name>
    <name type="ordered locus">NP_3694A</name>
</gene>
<comment type="function">
    <text evidence="1">Catalyzes the attachment of glutamate to tRNA(Glu) in a two-step reaction: glutamate is first activated by ATP to form Glu-AMP and then transferred to the acceptor end of tRNA(Glu).</text>
</comment>
<comment type="catalytic activity">
    <reaction evidence="1">
        <text>tRNA(Glu) + L-glutamate + ATP = L-glutamyl-tRNA(Glu) + AMP + diphosphate</text>
        <dbReference type="Rhea" id="RHEA:23540"/>
        <dbReference type="Rhea" id="RHEA-COMP:9663"/>
        <dbReference type="Rhea" id="RHEA-COMP:9680"/>
        <dbReference type="ChEBI" id="CHEBI:29985"/>
        <dbReference type="ChEBI" id="CHEBI:30616"/>
        <dbReference type="ChEBI" id="CHEBI:33019"/>
        <dbReference type="ChEBI" id="CHEBI:78442"/>
        <dbReference type="ChEBI" id="CHEBI:78520"/>
        <dbReference type="ChEBI" id="CHEBI:456215"/>
        <dbReference type="EC" id="6.1.1.17"/>
    </reaction>
</comment>
<comment type="subcellular location">
    <subcellularLocation>
        <location evidence="1">Cytoplasm</location>
    </subcellularLocation>
</comment>
<comment type="similarity">
    <text evidence="1">Belongs to the class-I aminoacyl-tRNA synthetase family. Glutamate--tRNA ligase type 2 subfamily.</text>
</comment>
<reference key="1">
    <citation type="journal article" date="2005" name="Genome Res.">
        <title>Living with two extremes: conclusions from the genome sequence of Natronomonas pharaonis.</title>
        <authorList>
            <person name="Falb M."/>
            <person name="Pfeiffer F."/>
            <person name="Palm P."/>
            <person name="Rodewald K."/>
            <person name="Hickmann V."/>
            <person name="Tittor J."/>
            <person name="Oesterhelt D."/>
        </authorList>
    </citation>
    <scope>NUCLEOTIDE SEQUENCE [LARGE SCALE GENOMIC DNA]</scope>
    <source>
        <strain>ATCC 35678 / DSM 2160 / CIP 103997 / JCM 8858 / NBRC 14720 / NCIMB 2260 / Gabara</strain>
    </source>
</reference>